<feature type="chain" id="PRO_0000305140" description="Zinc finger protein 776">
    <location>
        <begin position="1"/>
        <end position="518"/>
    </location>
</feature>
<feature type="domain" description="KRAB" evidence="3">
    <location>
        <begin position="14"/>
        <end position="89"/>
    </location>
</feature>
<feature type="zinc finger region" description="C2H2-type 1; degenerate" evidence="2">
    <location>
        <begin position="208"/>
        <end position="230"/>
    </location>
</feature>
<feature type="zinc finger region" description="C2H2-type 2; degenerate" evidence="2">
    <location>
        <begin position="236"/>
        <end position="258"/>
    </location>
</feature>
<feature type="zinc finger region" description="C2H2-type 3" evidence="2">
    <location>
        <begin position="264"/>
        <end position="286"/>
    </location>
</feature>
<feature type="zinc finger region" description="C2H2-type 4" evidence="2">
    <location>
        <begin position="292"/>
        <end position="314"/>
    </location>
</feature>
<feature type="zinc finger region" description="C2H2-type 5" evidence="2">
    <location>
        <begin position="320"/>
        <end position="342"/>
    </location>
</feature>
<feature type="zinc finger region" description="C2H2-type 6" evidence="2">
    <location>
        <begin position="348"/>
        <end position="370"/>
    </location>
</feature>
<feature type="zinc finger region" description="C2H2-type 7" evidence="2">
    <location>
        <begin position="376"/>
        <end position="398"/>
    </location>
</feature>
<feature type="zinc finger region" description="C2H2-type 8" evidence="2">
    <location>
        <begin position="404"/>
        <end position="426"/>
    </location>
</feature>
<feature type="zinc finger region" description="C2H2-type 9" evidence="2">
    <location>
        <begin position="432"/>
        <end position="454"/>
    </location>
</feature>
<feature type="zinc finger region" description="C2H2-type 10; degenerate" evidence="2">
    <location>
        <begin position="460"/>
        <end position="482"/>
    </location>
</feature>
<feature type="zinc finger region" description="C2H2-type 11" evidence="2">
    <location>
        <begin position="488"/>
        <end position="510"/>
    </location>
</feature>
<feature type="cross-link" description="Glycyl lysine isopeptide (Lys-Gly) (interchain with G-Cter in SUMO2)" evidence="6">
    <location>
        <position position="171"/>
    </location>
</feature>
<feature type="cross-link" description="Glycyl lysine isopeptide (Lys-Gly) (interchain with G-Cter in SUMO2)" evidence="5 6">
    <location>
        <position position="196"/>
    </location>
</feature>
<feature type="cross-link" description="Glycyl lysine isopeptide (Lys-Gly) (interchain with G-Cter in SUMO2)" evidence="6">
    <location>
        <position position="220"/>
    </location>
</feature>
<feature type="cross-link" description="Glycyl lysine isopeptide (Lys-Gly) (interchain with G-Cter in SUMO2)" evidence="6">
    <location>
        <position position="247"/>
    </location>
</feature>
<feature type="sequence conflict" description="In Ref. 1; CAH18239." evidence="4" ref="1">
    <original>E</original>
    <variation>V</variation>
    <location>
        <position position="183"/>
    </location>
</feature>
<feature type="sequence conflict" description="In Ref. 1; CAH18239." evidence="4" ref="1">
    <original>C</original>
    <variation>R</variation>
    <location>
        <position position="462"/>
    </location>
</feature>
<feature type="sequence conflict" description="In Ref. 3; BAC04588." evidence="4" ref="3">
    <original>H</original>
    <variation>R</variation>
    <location>
        <position position="470"/>
    </location>
</feature>
<sequence>MAAAALRPPAQGTVTFEDVAVNFSQEEWSLLSEAQRCLYHDVMLENLTLISSLGCWYGAKDETPSKQTLSIQQESPLRTHWTGVCTKKVHLWGMCGPLLGDILHQGTQHNQKLNGFGAYEKKLDDDANHHQDQKQHIGEKSYRSNAKGTSFVKNCKFHMSHEPFIFHEVGKDFLSSLRLLQQEDIHTSGKSNFETKHGIPLQGGKTHYICGESTIPFSNKHSLVLHQRLLPREGPYVCSDSGKFTSKSNSFNNHQGVRTGKRPYQCGQCDESFWYKAHLTEHQRVHTGERPYECGECDKSFSHKHSLVDHQRVHTGERPYECDECGKSFSHKRSLVHHQRVHTGERPYQCGECGKSFNHKCNLIQHQRVHTGERPFECTACGKLFRSNSHLKEHQRVHTGERPYECKECRKSFRYKSHLTEHQRVHTGERPYECRECGKCFHQKGSLIQHQQIHSGERPHECGECGKCFHQKGSLIRHQQIHSGERPHECGECGKCFRQKGNLIKHQRVHTGERHHEC</sequence>
<organism>
    <name type="scientific">Homo sapiens</name>
    <name type="common">Human</name>
    <dbReference type="NCBI Taxonomy" id="9606"/>
    <lineage>
        <taxon>Eukaryota</taxon>
        <taxon>Metazoa</taxon>
        <taxon>Chordata</taxon>
        <taxon>Craniata</taxon>
        <taxon>Vertebrata</taxon>
        <taxon>Euteleostomi</taxon>
        <taxon>Mammalia</taxon>
        <taxon>Eutheria</taxon>
        <taxon>Euarchontoglires</taxon>
        <taxon>Primates</taxon>
        <taxon>Haplorrhini</taxon>
        <taxon>Catarrhini</taxon>
        <taxon>Hominidae</taxon>
        <taxon>Homo</taxon>
    </lineage>
</organism>
<reference key="1">
    <citation type="journal article" date="2007" name="BMC Genomics">
        <title>The full-ORF clone resource of the German cDNA consortium.</title>
        <authorList>
            <person name="Bechtel S."/>
            <person name="Rosenfelder H."/>
            <person name="Duda A."/>
            <person name="Schmidt C.P."/>
            <person name="Ernst U."/>
            <person name="Wellenreuther R."/>
            <person name="Mehrle A."/>
            <person name="Schuster C."/>
            <person name="Bahr A."/>
            <person name="Bloecker H."/>
            <person name="Heubner D."/>
            <person name="Hoerlein A."/>
            <person name="Michel G."/>
            <person name="Wedler H."/>
            <person name="Koehrer K."/>
            <person name="Ottenwaelder B."/>
            <person name="Poustka A."/>
            <person name="Wiemann S."/>
            <person name="Schupp I."/>
        </authorList>
    </citation>
    <scope>NUCLEOTIDE SEQUENCE [LARGE SCALE MRNA]</scope>
    <source>
        <tissue>Prostate</tissue>
    </source>
</reference>
<reference key="2">
    <citation type="journal article" date="2004" name="Nature">
        <title>The DNA sequence and biology of human chromosome 19.</title>
        <authorList>
            <person name="Grimwood J."/>
            <person name="Gordon L.A."/>
            <person name="Olsen A.S."/>
            <person name="Terry A."/>
            <person name="Schmutz J."/>
            <person name="Lamerdin J.E."/>
            <person name="Hellsten U."/>
            <person name="Goodstein D."/>
            <person name="Couronne O."/>
            <person name="Tran-Gyamfi M."/>
            <person name="Aerts A."/>
            <person name="Altherr M."/>
            <person name="Ashworth L."/>
            <person name="Bajorek E."/>
            <person name="Black S."/>
            <person name="Branscomb E."/>
            <person name="Caenepeel S."/>
            <person name="Carrano A.V."/>
            <person name="Caoile C."/>
            <person name="Chan Y.M."/>
            <person name="Christensen M."/>
            <person name="Cleland C.A."/>
            <person name="Copeland A."/>
            <person name="Dalin E."/>
            <person name="Dehal P."/>
            <person name="Denys M."/>
            <person name="Detter J.C."/>
            <person name="Escobar J."/>
            <person name="Flowers D."/>
            <person name="Fotopulos D."/>
            <person name="Garcia C."/>
            <person name="Georgescu A.M."/>
            <person name="Glavina T."/>
            <person name="Gomez M."/>
            <person name="Gonzales E."/>
            <person name="Groza M."/>
            <person name="Hammon N."/>
            <person name="Hawkins T."/>
            <person name="Haydu L."/>
            <person name="Ho I."/>
            <person name="Huang W."/>
            <person name="Israni S."/>
            <person name="Jett J."/>
            <person name="Kadner K."/>
            <person name="Kimball H."/>
            <person name="Kobayashi A."/>
            <person name="Larionov V."/>
            <person name="Leem S.-H."/>
            <person name="Lopez F."/>
            <person name="Lou Y."/>
            <person name="Lowry S."/>
            <person name="Malfatti S."/>
            <person name="Martinez D."/>
            <person name="McCready P.M."/>
            <person name="Medina C."/>
            <person name="Morgan J."/>
            <person name="Nelson K."/>
            <person name="Nolan M."/>
            <person name="Ovcharenko I."/>
            <person name="Pitluck S."/>
            <person name="Pollard M."/>
            <person name="Popkie A.P."/>
            <person name="Predki P."/>
            <person name="Quan G."/>
            <person name="Ramirez L."/>
            <person name="Rash S."/>
            <person name="Retterer J."/>
            <person name="Rodriguez A."/>
            <person name="Rogers S."/>
            <person name="Salamov A."/>
            <person name="Salazar A."/>
            <person name="She X."/>
            <person name="Smith D."/>
            <person name="Slezak T."/>
            <person name="Solovyev V."/>
            <person name="Thayer N."/>
            <person name="Tice H."/>
            <person name="Tsai M."/>
            <person name="Ustaszewska A."/>
            <person name="Vo N."/>
            <person name="Wagner M."/>
            <person name="Wheeler J."/>
            <person name="Wu K."/>
            <person name="Xie G."/>
            <person name="Yang J."/>
            <person name="Dubchak I."/>
            <person name="Furey T.S."/>
            <person name="DeJong P."/>
            <person name="Dickson M."/>
            <person name="Gordon D."/>
            <person name="Eichler E.E."/>
            <person name="Pennacchio L.A."/>
            <person name="Richardson P."/>
            <person name="Stubbs L."/>
            <person name="Rokhsar D.S."/>
            <person name="Myers R.M."/>
            <person name="Rubin E.M."/>
            <person name="Lucas S.M."/>
        </authorList>
    </citation>
    <scope>NUCLEOTIDE SEQUENCE [LARGE SCALE GENOMIC DNA]</scope>
</reference>
<reference key="3">
    <citation type="journal article" date="2004" name="Nat. Genet.">
        <title>Complete sequencing and characterization of 21,243 full-length human cDNAs.</title>
        <authorList>
            <person name="Ota T."/>
            <person name="Suzuki Y."/>
            <person name="Nishikawa T."/>
            <person name="Otsuki T."/>
            <person name="Sugiyama T."/>
            <person name="Irie R."/>
            <person name="Wakamatsu A."/>
            <person name="Hayashi K."/>
            <person name="Sato H."/>
            <person name="Nagai K."/>
            <person name="Kimura K."/>
            <person name="Makita H."/>
            <person name="Sekine M."/>
            <person name="Obayashi M."/>
            <person name="Nishi T."/>
            <person name="Shibahara T."/>
            <person name="Tanaka T."/>
            <person name="Ishii S."/>
            <person name="Yamamoto J."/>
            <person name="Saito K."/>
            <person name="Kawai Y."/>
            <person name="Isono Y."/>
            <person name="Nakamura Y."/>
            <person name="Nagahari K."/>
            <person name="Murakami K."/>
            <person name="Yasuda T."/>
            <person name="Iwayanagi T."/>
            <person name="Wagatsuma M."/>
            <person name="Shiratori A."/>
            <person name="Sudo H."/>
            <person name="Hosoiri T."/>
            <person name="Kaku Y."/>
            <person name="Kodaira H."/>
            <person name="Kondo H."/>
            <person name="Sugawara M."/>
            <person name="Takahashi M."/>
            <person name="Kanda K."/>
            <person name="Yokoi T."/>
            <person name="Furuya T."/>
            <person name="Kikkawa E."/>
            <person name="Omura Y."/>
            <person name="Abe K."/>
            <person name="Kamihara K."/>
            <person name="Katsuta N."/>
            <person name="Sato K."/>
            <person name="Tanikawa M."/>
            <person name="Yamazaki M."/>
            <person name="Ninomiya K."/>
            <person name="Ishibashi T."/>
            <person name="Yamashita H."/>
            <person name="Murakawa K."/>
            <person name="Fujimori K."/>
            <person name="Tanai H."/>
            <person name="Kimata M."/>
            <person name="Watanabe M."/>
            <person name="Hiraoka S."/>
            <person name="Chiba Y."/>
            <person name="Ishida S."/>
            <person name="Ono Y."/>
            <person name="Takiguchi S."/>
            <person name="Watanabe S."/>
            <person name="Yosida M."/>
            <person name="Hotuta T."/>
            <person name="Kusano J."/>
            <person name="Kanehori K."/>
            <person name="Takahashi-Fujii A."/>
            <person name="Hara H."/>
            <person name="Tanase T.-O."/>
            <person name="Nomura Y."/>
            <person name="Togiya S."/>
            <person name="Komai F."/>
            <person name="Hara R."/>
            <person name="Takeuchi K."/>
            <person name="Arita M."/>
            <person name="Imose N."/>
            <person name="Musashino K."/>
            <person name="Yuuki H."/>
            <person name="Oshima A."/>
            <person name="Sasaki N."/>
            <person name="Aotsuka S."/>
            <person name="Yoshikawa Y."/>
            <person name="Matsunawa H."/>
            <person name="Ichihara T."/>
            <person name="Shiohata N."/>
            <person name="Sano S."/>
            <person name="Moriya S."/>
            <person name="Momiyama H."/>
            <person name="Satoh N."/>
            <person name="Takami S."/>
            <person name="Terashima Y."/>
            <person name="Suzuki O."/>
            <person name="Nakagawa S."/>
            <person name="Senoh A."/>
            <person name="Mizoguchi H."/>
            <person name="Goto Y."/>
            <person name="Shimizu F."/>
            <person name="Wakebe H."/>
            <person name="Hishigaki H."/>
            <person name="Watanabe T."/>
            <person name="Sugiyama A."/>
            <person name="Takemoto M."/>
            <person name="Kawakami B."/>
            <person name="Yamazaki M."/>
            <person name="Watanabe K."/>
            <person name="Kumagai A."/>
            <person name="Itakura S."/>
            <person name="Fukuzumi Y."/>
            <person name="Fujimori Y."/>
            <person name="Komiyama M."/>
            <person name="Tashiro H."/>
            <person name="Tanigami A."/>
            <person name="Fujiwara T."/>
            <person name="Ono T."/>
            <person name="Yamada K."/>
            <person name="Fujii Y."/>
            <person name="Ozaki K."/>
            <person name="Hirao M."/>
            <person name="Ohmori Y."/>
            <person name="Kawabata A."/>
            <person name="Hikiji T."/>
            <person name="Kobatake N."/>
            <person name="Inagaki H."/>
            <person name="Ikema Y."/>
            <person name="Okamoto S."/>
            <person name="Okitani R."/>
            <person name="Kawakami T."/>
            <person name="Noguchi S."/>
            <person name="Itoh T."/>
            <person name="Shigeta K."/>
            <person name="Senba T."/>
            <person name="Matsumura K."/>
            <person name="Nakajima Y."/>
            <person name="Mizuno T."/>
            <person name="Morinaga M."/>
            <person name="Sasaki M."/>
            <person name="Togashi T."/>
            <person name="Oyama M."/>
            <person name="Hata H."/>
            <person name="Watanabe M."/>
            <person name="Komatsu T."/>
            <person name="Mizushima-Sugano J."/>
            <person name="Satoh T."/>
            <person name="Shirai Y."/>
            <person name="Takahashi Y."/>
            <person name="Nakagawa K."/>
            <person name="Okumura K."/>
            <person name="Nagase T."/>
            <person name="Nomura N."/>
            <person name="Kikuchi H."/>
            <person name="Masuho Y."/>
            <person name="Yamashita R."/>
            <person name="Nakai K."/>
            <person name="Yada T."/>
            <person name="Nakamura Y."/>
            <person name="Ohara O."/>
            <person name="Isogai T."/>
            <person name="Sugano S."/>
        </authorList>
    </citation>
    <scope>NUCLEOTIDE SEQUENCE [LARGE SCALE MRNA] OF 32-518</scope>
    <source>
        <tissue>Brain</tissue>
    </source>
</reference>
<reference key="4">
    <citation type="journal article" date="2014" name="Nat. Struct. Mol. Biol.">
        <title>Uncovering global SUMOylation signaling networks in a site-specific manner.</title>
        <authorList>
            <person name="Hendriks I.A."/>
            <person name="D'Souza R.C."/>
            <person name="Yang B."/>
            <person name="Verlaan-de Vries M."/>
            <person name="Mann M."/>
            <person name="Vertegaal A.C."/>
        </authorList>
    </citation>
    <scope>SUMOYLATION [LARGE SCALE ANALYSIS] AT LYS-196</scope>
    <scope>IDENTIFICATION BY MASS SPECTROMETRY [LARGE SCALE ANALYSIS]</scope>
</reference>
<reference key="5">
    <citation type="journal article" date="2017" name="Nat. Struct. Mol. Biol.">
        <title>Site-specific mapping of the human SUMO proteome reveals co-modification with phosphorylation.</title>
        <authorList>
            <person name="Hendriks I.A."/>
            <person name="Lyon D."/>
            <person name="Young C."/>
            <person name="Jensen L.J."/>
            <person name="Vertegaal A.C."/>
            <person name="Nielsen M.L."/>
        </authorList>
    </citation>
    <scope>SUMOYLATION [LARGE SCALE ANALYSIS] AT LYS-171; LYS-196; LYS-220 AND LYS-247</scope>
    <scope>IDENTIFICATION BY MASS SPECTROMETRY [LARGE SCALE ANALYSIS]</scope>
</reference>
<evidence type="ECO:0000250" key="1"/>
<evidence type="ECO:0000255" key="2">
    <source>
        <dbReference type="PROSITE-ProRule" id="PRU00042"/>
    </source>
</evidence>
<evidence type="ECO:0000255" key="3">
    <source>
        <dbReference type="PROSITE-ProRule" id="PRU00119"/>
    </source>
</evidence>
<evidence type="ECO:0000305" key="4"/>
<evidence type="ECO:0007744" key="5">
    <source>
    </source>
</evidence>
<evidence type="ECO:0007744" key="6">
    <source>
    </source>
</evidence>
<gene>
    <name type="primary">ZNF776</name>
</gene>
<keyword id="KW-0238">DNA-binding</keyword>
<keyword id="KW-1017">Isopeptide bond</keyword>
<keyword id="KW-0479">Metal-binding</keyword>
<keyword id="KW-0539">Nucleus</keyword>
<keyword id="KW-1267">Proteomics identification</keyword>
<keyword id="KW-1185">Reference proteome</keyword>
<keyword id="KW-0677">Repeat</keyword>
<keyword id="KW-0804">Transcription</keyword>
<keyword id="KW-0805">Transcription regulation</keyword>
<keyword id="KW-0832">Ubl conjugation</keyword>
<keyword id="KW-0862">Zinc</keyword>
<keyword id="KW-0863">Zinc-finger</keyword>
<dbReference type="EMBL" id="CR749390">
    <property type="protein sequence ID" value="CAH18239.1"/>
    <property type="molecule type" value="mRNA"/>
</dbReference>
<dbReference type="EMBL" id="AC003006">
    <property type="status" value="NOT_ANNOTATED_CDS"/>
    <property type="molecule type" value="Genomic_DNA"/>
</dbReference>
<dbReference type="EMBL" id="AK127764">
    <property type="protein sequence ID" value="BAC87119.1"/>
    <property type="status" value="ALT_INIT"/>
    <property type="molecule type" value="mRNA"/>
</dbReference>
<dbReference type="EMBL" id="AK095607">
    <property type="protein sequence ID" value="BAC04588.1"/>
    <property type="status" value="ALT_SEQ"/>
    <property type="molecule type" value="mRNA"/>
</dbReference>
<dbReference type="CCDS" id="CCDS12962.2"/>
<dbReference type="RefSeq" id="NP_001334936.1">
    <property type="nucleotide sequence ID" value="NM_001348007.1"/>
</dbReference>
<dbReference type="RefSeq" id="NP_775903.3">
    <property type="nucleotide sequence ID" value="NM_173632.3"/>
</dbReference>
<dbReference type="SMR" id="Q68DI1"/>
<dbReference type="BioGRID" id="129824">
    <property type="interactions" value="18"/>
</dbReference>
<dbReference type="FunCoup" id="Q68DI1">
    <property type="interactions" value="58"/>
</dbReference>
<dbReference type="IntAct" id="Q68DI1">
    <property type="interactions" value="9"/>
</dbReference>
<dbReference type="STRING" id="9606.ENSP00000321812"/>
<dbReference type="iPTMnet" id="Q68DI1"/>
<dbReference type="PhosphoSitePlus" id="Q68DI1"/>
<dbReference type="BioMuta" id="ZNF776"/>
<dbReference type="DMDM" id="296453057"/>
<dbReference type="jPOST" id="Q68DI1"/>
<dbReference type="MassIVE" id="Q68DI1"/>
<dbReference type="PaxDb" id="9606-ENSP00000321812"/>
<dbReference type="PeptideAtlas" id="Q68DI1"/>
<dbReference type="ProteomicsDB" id="66081"/>
<dbReference type="Pumba" id="Q68DI1"/>
<dbReference type="Antibodypedia" id="33289">
    <property type="antibodies" value="77 antibodies from 14 providers"/>
</dbReference>
<dbReference type="DNASU" id="284309"/>
<dbReference type="Ensembl" id="ENST00000317178.10">
    <property type="protein sequence ID" value="ENSP00000321812.5"/>
    <property type="gene ID" value="ENSG00000152443.13"/>
</dbReference>
<dbReference type="GeneID" id="284309"/>
<dbReference type="KEGG" id="hsa:284309"/>
<dbReference type="MANE-Select" id="ENST00000317178.10">
    <property type="protein sequence ID" value="ENSP00000321812.5"/>
    <property type="RefSeq nucleotide sequence ID" value="NM_173632.4"/>
    <property type="RefSeq protein sequence ID" value="NP_775903.3"/>
</dbReference>
<dbReference type="UCSC" id="uc002qqa.3">
    <property type="organism name" value="human"/>
</dbReference>
<dbReference type="AGR" id="HGNC:26765"/>
<dbReference type="CTD" id="284309"/>
<dbReference type="DisGeNET" id="284309"/>
<dbReference type="GeneCards" id="ZNF776"/>
<dbReference type="HGNC" id="HGNC:26765">
    <property type="gene designation" value="ZNF776"/>
</dbReference>
<dbReference type="HPA" id="ENSG00000152443">
    <property type="expression patterns" value="Low tissue specificity"/>
</dbReference>
<dbReference type="MalaCards" id="ZNF776"/>
<dbReference type="neXtProt" id="NX_Q68DI1"/>
<dbReference type="OpenTargets" id="ENSG00000152443"/>
<dbReference type="PharmGKB" id="PA162410382"/>
<dbReference type="VEuPathDB" id="HostDB:ENSG00000152443"/>
<dbReference type="eggNOG" id="KOG1721">
    <property type="taxonomic scope" value="Eukaryota"/>
</dbReference>
<dbReference type="GeneTree" id="ENSGT00940000164345"/>
<dbReference type="HOGENOM" id="CLU_002678_0_2_1"/>
<dbReference type="InParanoid" id="Q68DI1"/>
<dbReference type="OMA" id="ICGESTI"/>
<dbReference type="OrthoDB" id="8922241at2759"/>
<dbReference type="PAN-GO" id="Q68DI1">
    <property type="GO annotations" value="4 GO annotations based on evolutionary models"/>
</dbReference>
<dbReference type="PhylomeDB" id="Q68DI1"/>
<dbReference type="TreeFam" id="TF342033"/>
<dbReference type="PathwayCommons" id="Q68DI1"/>
<dbReference type="Reactome" id="R-HSA-212436">
    <property type="pathway name" value="Generic Transcription Pathway"/>
</dbReference>
<dbReference type="SignaLink" id="Q68DI1"/>
<dbReference type="BioGRID-ORCS" id="284309">
    <property type="hits" value="11 hits in 1162 CRISPR screens"/>
</dbReference>
<dbReference type="ChiTaRS" id="ZNF776">
    <property type="organism name" value="human"/>
</dbReference>
<dbReference type="GenomeRNAi" id="284309"/>
<dbReference type="Pharos" id="Q68DI1">
    <property type="development level" value="Tdark"/>
</dbReference>
<dbReference type="PRO" id="PR:Q68DI1"/>
<dbReference type="Proteomes" id="UP000005640">
    <property type="component" value="Chromosome 19"/>
</dbReference>
<dbReference type="RNAct" id="Q68DI1">
    <property type="molecule type" value="protein"/>
</dbReference>
<dbReference type="Bgee" id="ENSG00000152443">
    <property type="expression patterns" value="Expressed in endothelial cell and 188 other cell types or tissues"/>
</dbReference>
<dbReference type="ExpressionAtlas" id="Q68DI1">
    <property type="expression patterns" value="baseline and differential"/>
</dbReference>
<dbReference type="GO" id="GO:0005634">
    <property type="term" value="C:nucleus"/>
    <property type="evidence" value="ECO:0000318"/>
    <property type="project" value="GO_Central"/>
</dbReference>
<dbReference type="GO" id="GO:0000981">
    <property type="term" value="F:DNA-binding transcription factor activity, RNA polymerase II-specific"/>
    <property type="evidence" value="ECO:0000318"/>
    <property type="project" value="GO_Central"/>
</dbReference>
<dbReference type="GO" id="GO:0000978">
    <property type="term" value="F:RNA polymerase II cis-regulatory region sequence-specific DNA binding"/>
    <property type="evidence" value="ECO:0000318"/>
    <property type="project" value="GO_Central"/>
</dbReference>
<dbReference type="GO" id="GO:0008270">
    <property type="term" value="F:zinc ion binding"/>
    <property type="evidence" value="ECO:0007669"/>
    <property type="project" value="UniProtKB-KW"/>
</dbReference>
<dbReference type="GO" id="GO:0045944">
    <property type="term" value="P:positive regulation of transcription by RNA polymerase II"/>
    <property type="evidence" value="ECO:0007669"/>
    <property type="project" value="UniProtKB-ARBA"/>
</dbReference>
<dbReference type="GO" id="GO:0006357">
    <property type="term" value="P:regulation of transcription by RNA polymerase II"/>
    <property type="evidence" value="ECO:0000318"/>
    <property type="project" value="GO_Central"/>
</dbReference>
<dbReference type="CDD" id="cd07765">
    <property type="entry name" value="KRAB_A-box"/>
    <property type="match status" value="1"/>
</dbReference>
<dbReference type="FunFam" id="3.30.160.60:FF:000012">
    <property type="entry name" value="RB-associated KRAB zinc finger protein-like"/>
    <property type="match status" value="1"/>
</dbReference>
<dbReference type="FunFam" id="3.30.160.60:FF:000214">
    <property type="entry name" value="replication initiator 1 isoform X1"/>
    <property type="match status" value="1"/>
</dbReference>
<dbReference type="FunFam" id="3.30.160.60:FF:000249">
    <property type="entry name" value="Zinc finger protein 154"/>
    <property type="match status" value="3"/>
</dbReference>
<dbReference type="FunFam" id="3.30.160.60:FF:002343">
    <property type="entry name" value="Zinc finger protein 33A"/>
    <property type="match status" value="2"/>
</dbReference>
<dbReference type="FunFam" id="3.30.160.60:FF:000200">
    <property type="entry name" value="zinc finger protein 510 isoform X2"/>
    <property type="match status" value="1"/>
</dbReference>
<dbReference type="FunFam" id="3.30.160.60:FF:001270">
    <property type="entry name" value="zinc finger protein 583 isoform X1"/>
    <property type="match status" value="1"/>
</dbReference>
<dbReference type="Gene3D" id="6.10.140.140">
    <property type="match status" value="1"/>
</dbReference>
<dbReference type="Gene3D" id="3.30.160.60">
    <property type="entry name" value="Classic Zinc Finger"/>
    <property type="match status" value="10"/>
</dbReference>
<dbReference type="InterPro" id="IPR050329">
    <property type="entry name" value="GLI_C2H2-zinc-finger"/>
</dbReference>
<dbReference type="InterPro" id="IPR001909">
    <property type="entry name" value="KRAB"/>
</dbReference>
<dbReference type="InterPro" id="IPR036051">
    <property type="entry name" value="KRAB_dom_sf"/>
</dbReference>
<dbReference type="InterPro" id="IPR036236">
    <property type="entry name" value="Znf_C2H2_sf"/>
</dbReference>
<dbReference type="InterPro" id="IPR013087">
    <property type="entry name" value="Znf_C2H2_type"/>
</dbReference>
<dbReference type="PANTHER" id="PTHR19818:SF158">
    <property type="entry name" value="C2H2-TYPE DOMAIN-CONTAINING PROTEIN-RELATED"/>
    <property type="match status" value="1"/>
</dbReference>
<dbReference type="PANTHER" id="PTHR19818">
    <property type="entry name" value="ZINC FINGER PROTEIN ZIC AND GLI"/>
    <property type="match status" value="1"/>
</dbReference>
<dbReference type="Pfam" id="PF01352">
    <property type="entry name" value="KRAB"/>
    <property type="match status" value="1"/>
</dbReference>
<dbReference type="Pfam" id="PF00096">
    <property type="entry name" value="zf-C2H2"/>
    <property type="match status" value="9"/>
</dbReference>
<dbReference type="SMART" id="SM00349">
    <property type="entry name" value="KRAB"/>
    <property type="match status" value="1"/>
</dbReference>
<dbReference type="SMART" id="SM00355">
    <property type="entry name" value="ZnF_C2H2"/>
    <property type="match status" value="9"/>
</dbReference>
<dbReference type="SUPFAM" id="SSF57667">
    <property type="entry name" value="beta-beta-alpha zinc fingers"/>
    <property type="match status" value="6"/>
</dbReference>
<dbReference type="SUPFAM" id="SSF109640">
    <property type="entry name" value="KRAB domain (Kruppel-associated box)"/>
    <property type="match status" value="1"/>
</dbReference>
<dbReference type="PROSITE" id="PS50805">
    <property type="entry name" value="KRAB"/>
    <property type="match status" value="1"/>
</dbReference>
<dbReference type="PROSITE" id="PS00028">
    <property type="entry name" value="ZINC_FINGER_C2H2_1"/>
    <property type="match status" value="9"/>
</dbReference>
<dbReference type="PROSITE" id="PS50157">
    <property type="entry name" value="ZINC_FINGER_C2H2_2"/>
    <property type="match status" value="10"/>
</dbReference>
<comment type="function">
    <text evidence="1">May be involved in transcriptional regulation.</text>
</comment>
<comment type="interaction">
    <interactant intactId="EBI-12878746">
        <id>Q68DI1</id>
    </interactant>
    <interactant intactId="EBI-12012928">
        <id>P60371</id>
        <label>KRTAP10-6</label>
    </interactant>
    <organismsDiffer>false</organismsDiffer>
    <experiments>3</experiments>
</comment>
<comment type="subcellular location">
    <subcellularLocation>
        <location evidence="4">Nucleus</location>
    </subcellularLocation>
</comment>
<comment type="similarity">
    <text evidence="4">Belongs to the krueppel C2H2-type zinc-finger protein family.</text>
</comment>
<comment type="sequence caution" evidence="4">
    <conflict type="erroneous translation">
        <sequence resource="EMBL-CDS" id="BAC04588"/>
    </conflict>
    <text>Wrong choice of frame.</text>
</comment>
<comment type="sequence caution" evidence="4">
    <conflict type="erroneous initiation">
        <sequence resource="EMBL-CDS" id="BAC87119"/>
    </conflict>
    <text>Truncated N-terminus.</text>
</comment>
<name>ZN776_HUMAN</name>
<accession>Q68DI1</accession>
<accession>Q6ZS36</accession>
<accession>Q8N968</accession>
<proteinExistence type="evidence at protein level"/>
<protein>
    <recommendedName>
        <fullName>Zinc finger protein 776</fullName>
    </recommendedName>
</protein>